<reference key="1">
    <citation type="journal article" date="1987" name="Gene">
        <title>Isolation and structure of the replicon of the promiscuous plasmid pCU1.</title>
        <authorList>
            <person name="Kozlowski M."/>
            <person name="Thatte V."/>
            <person name="Lau P.C.K."/>
            <person name="Visentin L.P."/>
            <person name="Iyer V.N."/>
        </authorList>
    </citation>
    <scope>NUCLEOTIDE SEQUENCE [GENOMIC DNA]</scope>
</reference>
<keyword id="KW-0614">Plasmid</keyword>
<organism>
    <name type="scientific">Escherichia coli</name>
    <dbReference type="NCBI Taxonomy" id="562"/>
    <lineage>
        <taxon>Bacteria</taxon>
        <taxon>Pseudomonadati</taxon>
        <taxon>Pseudomonadota</taxon>
        <taxon>Gammaproteobacteria</taxon>
        <taxon>Enterobacterales</taxon>
        <taxon>Enterobacteriaceae</taxon>
        <taxon>Escherichia</taxon>
    </lineage>
</organism>
<proteinExistence type="predicted"/>
<protein>
    <recommendedName>
        <fullName>Uncharacterized 6.6 kDa protein</fullName>
    </recommendedName>
</protein>
<accession>P18352</accession>
<name>YPC3_ECOLX</name>
<sequence>MQSLAQFKSSGLWVTTHAWLNDRFLLPESQQKNLAELKRSFLDPALKRINEKTPLLA</sequence>
<dbReference type="EMBL" id="M18262">
    <property type="status" value="NOT_ANNOTATED_CDS"/>
    <property type="molecule type" value="Genomic_DNA"/>
</dbReference>
<dbReference type="SMR" id="P18352"/>
<dbReference type="Gene3D" id="1.10.10.10">
    <property type="entry name" value="Winged helix-like DNA-binding domain superfamily/Winged helix DNA-binding domain"/>
    <property type="match status" value="1"/>
</dbReference>
<dbReference type="InterPro" id="IPR036388">
    <property type="entry name" value="WH-like_DNA-bd_sf"/>
</dbReference>
<dbReference type="InterPro" id="IPR036390">
    <property type="entry name" value="WH_DNA-bd_sf"/>
</dbReference>
<dbReference type="Pfam" id="PF21205">
    <property type="entry name" value="Rep3_C"/>
    <property type="match status" value="1"/>
</dbReference>
<dbReference type="SUPFAM" id="SSF46785">
    <property type="entry name" value="Winged helix' DNA-binding domain"/>
    <property type="match status" value="1"/>
</dbReference>
<geneLocation type="plasmid">
    <name>IncN pCU1</name>
</geneLocation>
<feature type="chain" id="PRO_0000068534" description="Uncharacterized 6.6 kDa protein">
    <location>
        <begin position="1"/>
        <end position="57"/>
    </location>
</feature>